<evidence type="ECO:0000250" key="1"/>
<evidence type="ECO:0000250" key="2">
    <source>
        <dbReference type="UniProtKB" id="P00157"/>
    </source>
</evidence>
<evidence type="ECO:0000255" key="3">
    <source>
        <dbReference type="PROSITE-ProRule" id="PRU00967"/>
    </source>
</evidence>
<evidence type="ECO:0000255" key="4">
    <source>
        <dbReference type="PROSITE-ProRule" id="PRU00968"/>
    </source>
</evidence>
<proteinExistence type="inferred from homology"/>
<protein>
    <recommendedName>
        <fullName>Cytochrome b</fullName>
    </recommendedName>
    <alternativeName>
        <fullName>Complex III subunit 3</fullName>
    </alternativeName>
    <alternativeName>
        <fullName>Complex III subunit III</fullName>
    </alternativeName>
    <alternativeName>
        <fullName>Cytochrome b-c1 complex subunit 3</fullName>
    </alternativeName>
    <alternativeName>
        <fullName>Ubiquinol-cytochrome-c reductase complex cytochrome b subunit</fullName>
    </alternativeName>
</protein>
<geneLocation type="mitochondrion"/>
<keyword id="KW-0249">Electron transport</keyword>
<keyword id="KW-0349">Heme</keyword>
<keyword id="KW-0408">Iron</keyword>
<keyword id="KW-0472">Membrane</keyword>
<keyword id="KW-0479">Metal-binding</keyword>
<keyword id="KW-0496">Mitochondrion</keyword>
<keyword id="KW-0999">Mitochondrion inner membrane</keyword>
<keyword id="KW-0679">Respiratory chain</keyword>
<keyword id="KW-0812">Transmembrane</keyword>
<keyword id="KW-1133">Transmembrane helix</keyword>
<keyword id="KW-0813">Transport</keyword>
<keyword id="KW-0830">Ubiquinone</keyword>
<organism>
    <name type="scientific">Calomys musculinus</name>
    <name type="common">Drylands vesper mouse</name>
    <dbReference type="NCBI Taxonomy" id="56212"/>
    <lineage>
        <taxon>Eukaryota</taxon>
        <taxon>Metazoa</taxon>
        <taxon>Chordata</taxon>
        <taxon>Craniata</taxon>
        <taxon>Vertebrata</taxon>
        <taxon>Euteleostomi</taxon>
        <taxon>Mammalia</taxon>
        <taxon>Eutheria</taxon>
        <taxon>Euarchontoglires</taxon>
        <taxon>Glires</taxon>
        <taxon>Rodentia</taxon>
        <taxon>Myomorpha</taxon>
        <taxon>Muroidea</taxon>
        <taxon>Cricetidae</taxon>
        <taxon>Sigmodontinae</taxon>
        <taxon>Calomys</taxon>
    </lineage>
</organism>
<dbReference type="EMBL" id="AF385603">
    <property type="protein sequence ID" value="AAL07683.1"/>
    <property type="molecule type" value="Genomic_DNA"/>
</dbReference>
<dbReference type="SMR" id="Q94WP7"/>
<dbReference type="GO" id="GO:0005743">
    <property type="term" value="C:mitochondrial inner membrane"/>
    <property type="evidence" value="ECO:0007669"/>
    <property type="project" value="UniProtKB-SubCell"/>
</dbReference>
<dbReference type="GO" id="GO:0045275">
    <property type="term" value="C:respiratory chain complex III"/>
    <property type="evidence" value="ECO:0007669"/>
    <property type="project" value="InterPro"/>
</dbReference>
<dbReference type="GO" id="GO:0046872">
    <property type="term" value="F:metal ion binding"/>
    <property type="evidence" value="ECO:0007669"/>
    <property type="project" value="UniProtKB-KW"/>
</dbReference>
<dbReference type="GO" id="GO:0008121">
    <property type="term" value="F:ubiquinol-cytochrome-c reductase activity"/>
    <property type="evidence" value="ECO:0007669"/>
    <property type="project" value="InterPro"/>
</dbReference>
<dbReference type="GO" id="GO:0006122">
    <property type="term" value="P:mitochondrial electron transport, ubiquinol to cytochrome c"/>
    <property type="evidence" value="ECO:0007669"/>
    <property type="project" value="TreeGrafter"/>
</dbReference>
<dbReference type="CDD" id="cd00290">
    <property type="entry name" value="cytochrome_b_C"/>
    <property type="match status" value="1"/>
</dbReference>
<dbReference type="CDD" id="cd00284">
    <property type="entry name" value="Cytochrome_b_N"/>
    <property type="match status" value="1"/>
</dbReference>
<dbReference type="FunFam" id="1.20.810.10:FF:000002">
    <property type="entry name" value="Cytochrome b"/>
    <property type="match status" value="1"/>
</dbReference>
<dbReference type="Gene3D" id="1.20.810.10">
    <property type="entry name" value="Cytochrome Bc1 Complex, Chain C"/>
    <property type="match status" value="1"/>
</dbReference>
<dbReference type="InterPro" id="IPR005798">
    <property type="entry name" value="Cyt_b/b6_C"/>
</dbReference>
<dbReference type="InterPro" id="IPR036150">
    <property type="entry name" value="Cyt_b/b6_C_sf"/>
</dbReference>
<dbReference type="InterPro" id="IPR005797">
    <property type="entry name" value="Cyt_b/b6_N"/>
</dbReference>
<dbReference type="InterPro" id="IPR027387">
    <property type="entry name" value="Cytb/b6-like_sf"/>
</dbReference>
<dbReference type="InterPro" id="IPR030689">
    <property type="entry name" value="Cytochrome_b"/>
</dbReference>
<dbReference type="InterPro" id="IPR048260">
    <property type="entry name" value="Cytochrome_b_C_euk/bac"/>
</dbReference>
<dbReference type="InterPro" id="IPR048259">
    <property type="entry name" value="Cytochrome_b_N_euk/bac"/>
</dbReference>
<dbReference type="InterPro" id="IPR016174">
    <property type="entry name" value="Di-haem_cyt_TM"/>
</dbReference>
<dbReference type="PANTHER" id="PTHR19271">
    <property type="entry name" value="CYTOCHROME B"/>
    <property type="match status" value="1"/>
</dbReference>
<dbReference type="PANTHER" id="PTHR19271:SF16">
    <property type="entry name" value="CYTOCHROME B"/>
    <property type="match status" value="1"/>
</dbReference>
<dbReference type="Pfam" id="PF00032">
    <property type="entry name" value="Cytochrom_B_C"/>
    <property type="match status" value="1"/>
</dbReference>
<dbReference type="Pfam" id="PF00033">
    <property type="entry name" value="Cytochrome_B"/>
    <property type="match status" value="1"/>
</dbReference>
<dbReference type="PIRSF" id="PIRSF038885">
    <property type="entry name" value="COB"/>
    <property type="match status" value="1"/>
</dbReference>
<dbReference type="SUPFAM" id="SSF81648">
    <property type="entry name" value="a domain/subunit of cytochrome bc1 complex (Ubiquinol-cytochrome c reductase)"/>
    <property type="match status" value="1"/>
</dbReference>
<dbReference type="SUPFAM" id="SSF81342">
    <property type="entry name" value="Transmembrane di-heme cytochromes"/>
    <property type="match status" value="1"/>
</dbReference>
<dbReference type="PROSITE" id="PS51003">
    <property type="entry name" value="CYTB_CTER"/>
    <property type="match status" value="1"/>
</dbReference>
<dbReference type="PROSITE" id="PS51002">
    <property type="entry name" value="CYTB_NTER"/>
    <property type="match status" value="1"/>
</dbReference>
<accession>Q94WP7</accession>
<reference key="1">
    <citation type="journal article" date="2001" name="Mol. Phylogenet. Evol.">
        <title>Phylogeny and evolution of the neotropical rodent genus Calomys: inferences from mitochondrial DNA sequence data.</title>
        <authorList>
            <person name="Salazar-Bravo J."/>
            <person name="Dragoo J.W."/>
            <person name="Tinnin D.S."/>
            <person name="Yates T.L."/>
        </authorList>
    </citation>
    <scope>NUCLEOTIDE SEQUENCE [GENOMIC DNA]</scope>
</reference>
<gene>
    <name type="primary">MT-CYB</name>
    <name type="synonym">COB</name>
    <name type="synonym">CYTB</name>
    <name type="synonym">MTCYB</name>
</gene>
<comment type="function">
    <text evidence="2">Component of the ubiquinol-cytochrome c reductase complex (complex III or cytochrome b-c1 complex) that is part of the mitochondrial respiratory chain. The b-c1 complex mediates electron transfer from ubiquinol to cytochrome c. Contributes to the generation of a proton gradient across the mitochondrial membrane that is then used for ATP synthesis.</text>
</comment>
<comment type="cofactor">
    <cofactor evidence="2">
        <name>heme b</name>
        <dbReference type="ChEBI" id="CHEBI:60344"/>
    </cofactor>
    <text evidence="2">Binds 2 heme b groups non-covalently.</text>
</comment>
<comment type="subunit">
    <text evidence="2">The cytochrome bc1 complex contains 11 subunits: 3 respiratory subunits (MT-CYB, CYC1 and UQCRFS1), 2 core proteins (UQCRC1 and UQCRC2) and 6 low-molecular weight proteins (UQCRH/QCR6, UQCRB/QCR7, UQCRQ/QCR8, UQCR10/QCR9, UQCR11/QCR10 and a cleavage product of UQCRFS1). This cytochrome bc1 complex then forms a dimer.</text>
</comment>
<comment type="subcellular location">
    <subcellularLocation>
        <location evidence="2">Mitochondrion inner membrane</location>
        <topology evidence="2">Multi-pass membrane protein</topology>
    </subcellularLocation>
</comment>
<comment type="miscellaneous">
    <text evidence="1">Heme 1 (or BL or b562) is low-potential and absorbs at about 562 nm, and heme 2 (or BH or b566) is high-potential and absorbs at about 566 nm.</text>
</comment>
<comment type="similarity">
    <text evidence="3 4">Belongs to the cytochrome b family.</text>
</comment>
<comment type="caution">
    <text evidence="2">The full-length protein contains only eight transmembrane helices, not nine as predicted by bioinformatics tools.</text>
</comment>
<name>CYB_CALMU</name>
<sequence length="380" mass="42814">MTIMRKNHPLLKIINNSFIDLPTPCNISSWWNFGSLLGICLMVQIITGLFLAMHYTSDTATAFSSVAHICRDVNYGWLIRYMHANGASMFFICLFIHVGRGIYYGSYMLSETWNIGIALFLTTMATAFVGYVLPWGQMSFWGATVITNLLSAIPYIGSTLVEWIWGGFSVDKATLTRFFAFHFILPFIITAFVLVHLLFLHETGSNNPSGLNSDSDKIPFHPYYTIKDILGILMLLMVLMILVLFFPDVLGDPDNYTPANPLNTPAHIKPEWYSSLAYAILRSIPNKLGGVTALILSILILAMFPLINSSKLLGLVYRPITQAMYWIFIANLFILTWIGGQPVEYPFTMIGLISSILYFSIIVMFMFIASMIENNILKSH</sequence>
<feature type="chain" id="PRO_0000257876" description="Cytochrome b">
    <location>
        <begin position="1"/>
        <end position="380"/>
    </location>
</feature>
<feature type="transmembrane region" description="Helical" evidence="2">
    <location>
        <begin position="33"/>
        <end position="53"/>
    </location>
</feature>
<feature type="transmembrane region" description="Helical" evidence="2">
    <location>
        <begin position="77"/>
        <end position="98"/>
    </location>
</feature>
<feature type="transmembrane region" description="Helical" evidence="2">
    <location>
        <begin position="113"/>
        <end position="133"/>
    </location>
</feature>
<feature type="transmembrane region" description="Helical" evidence="2">
    <location>
        <begin position="178"/>
        <end position="198"/>
    </location>
</feature>
<feature type="transmembrane region" description="Helical" evidence="2">
    <location>
        <begin position="226"/>
        <end position="246"/>
    </location>
</feature>
<feature type="transmembrane region" description="Helical" evidence="2">
    <location>
        <begin position="288"/>
        <end position="308"/>
    </location>
</feature>
<feature type="transmembrane region" description="Helical" evidence="2">
    <location>
        <begin position="320"/>
        <end position="340"/>
    </location>
</feature>
<feature type="transmembrane region" description="Helical" evidence="2">
    <location>
        <begin position="347"/>
        <end position="367"/>
    </location>
</feature>
<feature type="binding site" description="axial binding residue" evidence="2">
    <location>
        <position position="83"/>
    </location>
    <ligand>
        <name>heme b</name>
        <dbReference type="ChEBI" id="CHEBI:60344"/>
        <label>b562</label>
    </ligand>
    <ligandPart>
        <name>Fe</name>
        <dbReference type="ChEBI" id="CHEBI:18248"/>
    </ligandPart>
</feature>
<feature type="binding site" description="axial binding residue" evidence="2">
    <location>
        <position position="97"/>
    </location>
    <ligand>
        <name>heme b</name>
        <dbReference type="ChEBI" id="CHEBI:60344"/>
        <label>b566</label>
    </ligand>
    <ligandPart>
        <name>Fe</name>
        <dbReference type="ChEBI" id="CHEBI:18248"/>
    </ligandPart>
</feature>
<feature type="binding site" description="axial binding residue" evidence="2">
    <location>
        <position position="182"/>
    </location>
    <ligand>
        <name>heme b</name>
        <dbReference type="ChEBI" id="CHEBI:60344"/>
        <label>b562</label>
    </ligand>
    <ligandPart>
        <name>Fe</name>
        <dbReference type="ChEBI" id="CHEBI:18248"/>
    </ligandPart>
</feature>
<feature type="binding site" description="axial binding residue" evidence="2">
    <location>
        <position position="196"/>
    </location>
    <ligand>
        <name>heme b</name>
        <dbReference type="ChEBI" id="CHEBI:60344"/>
        <label>b566</label>
    </ligand>
    <ligandPart>
        <name>Fe</name>
        <dbReference type="ChEBI" id="CHEBI:18248"/>
    </ligandPart>
</feature>
<feature type="binding site" evidence="2">
    <location>
        <position position="201"/>
    </location>
    <ligand>
        <name>a ubiquinone</name>
        <dbReference type="ChEBI" id="CHEBI:16389"/>
    </ligand>
</feature>